<reference key="1">
    <citation type="journal article" date="2005" name="J. Bacteriol.">
        <title>Completion of the genome sequence of Brucella abortus and comparison to the highly similar genomes of Brucella melitensis and Brucella suis.</title>
        <authorList>
            <person name="Halling S.M."/>
            <person name="Peterson-Burch B.D."/>
            <person name="Bricker B.J."/>
            <person name="Zuerner R.L."/>
            <person name="Qing Z."/>
            <person name="Li L.-L."/>
            <person name="Kapur V."/>
            <person name="Alt D.P."/>
            <person name="Olsen S.C."/>
        </authorList>
    </citation>
    <scope>NUCLEOTIDE SEQUENCE [LARGE SCALE GENOMIC DNA]</scope>
    <source>
        <strain>9-941</strain>
    </source>
</reference>
<proteinExistence type="inferred from homology"/>
<gene>
    <name evidence="1" type="primary">fluC2</name>
    <name evidence="1" type="synonym">crcB2</name>
    <name type="ordered locus">BruAb1_1367</name>
</gene>
<accession>Q57CD6</accession>
<sequence>MTPLDVMWVCLGGGVGSLGRWWIGRIVGEYHHGAFPLGTFLINISGAFVIGYLSVLFGVDWHDRYGTMLNAGVLTGILGGYTTFSSMQLDAVKLSHKGQGGLAVFYLVASVLSGLFAAWLGAMLAHLQG</sequence>
<feature type="chain" id="PRO_0000110068" description="Fluoride-specific ion channel FluC 2">
    <location>
        <begin position="1"/>
        <end position="129"/>
    </location>
</feature>
<feature type="transmembrane region" description="Helical" evidence="1">
    <location>
        <begin position="4"/>
        <end position="24"/>
    </location>
</feature>
<feature type="transmembrane region" description="Helical" evidence="1">
    <location>
        <begin position="39"/>
        <end position="59"/>
    </location>
</feature>
<feature type="transmembrane region" description="Helical" evidence="1">
    <location>
        <begin position="65"/>
        <end position="85"/>
    </location>
</feature>
<feature type="transmembrane region" description="Helical" evidence="1">
    <location>
        <begin position="104"/>
        <end position="124"/>
    </location>
</feature>
<feature type="binding site" evidence="1">
    <location>
        <position position="79"/>
    </location>
    <ligand>
        <name>Na(+)</name>
        <dbReference type="ChEBI" id="CHEBI:29101"/>
        <note>structural</note>
    </ligand>
</feature>
<feature type="binding site" evidence="1">
    <location>
        <position position="82"/>
    </location>
    <ligand>
        <name>Na(+)</name>
        <dbReference type="ChEBI" id="CHEBI:29101"/>
        <note>structural</note>
    </ligand>
</feature>
<comment type="function">
    <text evidence="1">Fluoride-specific ion channel. Important for reducing fluoride concentration in the cell, thus reducing its toxicity.</text>
</comment>
<comment type="catalytic activity">
    <reaction evidence="1">
        <text>fluoride(in) = fluoride(out)</text>
        <dbReference type="Rhea" id="RHEA:76159"/>
        <dbReference type="ChEBI" id="CHEBI:17051"/>
    </reaction>
    <physiologicalReaction direction="left-to-right" evidence="1">
        <dbReference type="Rhea" id="RHEA:76160"/>
    </physiologicalReaction>
</comment>
<comment type="activity regulation">
    <text evidence="1">Na(+) is not transported, but it plays an essential structural role and its presence is essential for fluoride channel function.</text>
</comment>
<comment type="subcellular location">
    <subcellularLocation>
        <location evidence="1">Cell inner membrane</location>
        <topology evidence="1">Multi-pass membrane protein</topology>
    </subcellularLocation>
</comment>
<comment type="similarity">
    <text evidence="1">Belongs to the fluoride channel Fluc/FEX (TC 1.A.43) family.</text>
</comment>
<organism>
    <name type="scientific">Brucella abortus biovar 1 (strain 9-941)</name>
    <dbReference type="NCBI Taxonomy" id="262698"/>
    <lineage>
        <taxon>Bacteria</taxon>
        <taxon>Pseudomonadati</taxon>
        <taxon>Pseudomonadota</taxon>
        <taxon>Alphaproteobacteria</taxon>
        <taxon>Hyphomicrobiales</taxon>
        <taxon>Brucellaceae</taxon>
        <taxon>Brucella/Ochrobactrum group</taxon>
        <taxon>Brucella</taxon>
    </lineage>
</organism>
<keyword id="KW-0997">Cell inner membrane</keyword>
<keyword id="KW-1003">Cell membrane</keyword>
<keyword id="KW-0407">Ion channel</keyword>
<keyword id="KW-0406">Ion transport</keyword>
<keyword id="KW-0472">Membrane</keyword>
<keyword id="KW-0479">Metal-binding</keyword>
<keyword id="KW-0915">Sodium</keyword>
<keyword id="KW-0812">Transmembrane</keyword>
<keyword id="KW-1133">Transmembrane helix</keyword>
<keyword id="KW-0813">Transport</keyword>
<evidence type="ECO:0000255" key="1">
    <source>
        <dbReference type="HAMAP-Rule" id="MF_00454"/>
    </source>
</evidence>
<protein>
    <recommendedName>
        <fullName evidence="1">Fluoride-specific ion channel FluC 2</fullName>
    </recommendedName>
</protein>
<name>FLUC2_BRUAB</name>
<dbReference type="EMBL" id="AE017223">
    <property type="protein sequence ID" value="AAX74698.1"/>
    <property type="molecule type" value="Genomic_DNA"/>
</dbReference>
<dbReference type="SMR" id="Q57CD6"/>
<dbReference type="DNASU" id="3788669"/>
<dbReference type="EnsemblBacteria" id="AAX74698">
    <property type="protein sequence ID" value="AAX74698"/>
    <property type="gene ID" value="BruAb1_1367"/>
</dbReference>
<dbReference type="KEGG" id="bmb:BruAb1_1367"/>
<dbReference type="HOGENOM" id="CLU_114342_3_0_5"/>
<dbReference type="Proteomes" id="UP000000540">
    <property type="component" value="Chromosome I"/>
</dbReference>
<dbReference type="GO" id="GO:0005886">
    <property type="term" value="C:plasma membrane"/>
    <property type="evidence" value="ECO:0007669"/>
    <property type="project" value="UniProtKB-SubCell"/>
</dbReference>
<dbReference type="GO" id="GO:0062054">
    <property type="term" value="F:fluoride channel activity"/>
    <property type="evidence" value="ECO:0007669"/>
    <property type="project" value="UniProtKB-UniRule"/>
</dbReference>
<dbReference type="GO" id="GO:0046872">
    <property type="term" value="F:metal ion binding"/>
    <property type="evidence" value="ECO:0007669"/>
    <property type="project" value="UniProtKB-KW"/>
</dbReference>
<dbReference type="GO" id="GO:0140114">
    <property type="term" value="P:cellular detoxification of fluoride"/>
    <property type="evidence" value="ECO:0007669"/>
    <property type="project" value="UniProtKB-UniRule"/>
</dbReference>
<dbReference type="HAMAP" id="MF_00454">
    <property type="entry name" value="FluC"/>
    <property type="match status" value="1"/>
</dbReference>
<dbReference type="InterPro" id="IPR003691">
    <property type="entry name" value="FluC"/>
</dbReference>
<dbReference type="NCBIfam" id="TIGR00494">
    <property type="entry name" value="crcB"/>
    <property type="match status" value="1"/>
</dbReference>
<dbReference type="PANTHER" id="PTHR28259">
    <property type="entry name" value="FLUORIDE EXPORT PROTEIN 1-RELATED"/>
    <property type="match status" value="1"/>
</dbReference>
<dbReference type="PANTHER" id="PTHR28259:SF18">
    <property type="entry name" value="FLUORIDE-SPECIFIC ION CHANNEL FLUC"/>
    <property type="match status" value="1"/>
</dbReference>
<dbReference type="Pfam" id="PF02537">
    <property type="entry name" value="CRCB"/>
    <property type="match status" value="1"/>
</dbReference>